<name>Y2443_SHEPA</name>
<organism>
    <name type="scientific">Shewanella pealeana (strain ATCC 700345 / ANG-SQ1)</name>
    <dbReference type="NCBI Taxonomy" id="398579"/>
    <lineage>
        <taxon>Bacteria</taxon>
        <taxon>Pseudomonadati</taxon>
        <taxon>Pseudomonadota</taxon>
        <taxon>Gammaproteobacteria</taxon>
        <taxon>Alteromonadales</taxon>
        <taxon>Shewanellaceae</taxon>
        <taxon>Shewanella</taxon>
    </lineage>
</organism>
<accession>A8H5C6</accession>
<evidence type="ECO:0000255" key="1">
    <source>
        <dbReference type="HAMAP-Rule" id="MF_01866"/>
    </source>
</evidence>
<keyword id="KW-1185">Reference proteome</keyword>
<feature type="chain" id="PRO_0000375373" description="YcgL domain-containing protein Spea_2443">
    <location>
        <begin position="1"/>
        <end position="93"/>
    </location>
</feature>
<feature type="domain" description="YcgL" evidence="1">
    <location>
        <begin position="1"/>
        <end position="85"/>
    </location>
</feature>
<gene>
    <name type="ordered locus">Spea_2443</name>
</gene>
<reference key="1">
    <citation type="submission" date="2007-10" db="EMBL/GenBank/DDBJ databases">
        <title>Complete sequence of Shewanella pealeana ATCC 700345.</title>
        <authorList>
            <consortium name="US DOE Joint Genome Institute"/>
            <person name="Copeland A."/>
            <person name="Lucas S."/>
            <person name="Lapidus A."/>
            <person name="Barry K."/>
            <person name="Glavina del Rio T."/>
            <person name="Dalin E."/>
            <person name="Tice H."/>
            <person name="Pitluck S."/>
            <person name="Chertkov O."/>
            <person name="Brettin T."/>
            <person name="Bruce D."/>
            <person name="Detter J.C."/>
            <person name="Han C."/>
            <person name="Schmutz J."/>
            <person name="Larimer F."/>
            <person name="Land M."/>
            <person name="Hauser L."/>
            <person name="Kyrpides N."/>
            <person name="Kim E."/>
            <person name="Zhao J.-S.Z."/>
            <person name="Manno D."/>
            <person name="Hawari J."/>
            <person name="Richardson P."/>
        </authorList>
    </citation>
    <scope>NUCLEOTIDE SEQUENCE [LARGE SCALE GENOMIC DNA]</scope>
    <source>
        <strain>ATCC 700345 / ANG-SQ1</strain>
    </source>
</reference>
<sequence length="93" mass="10881">MICAVYKSLRKAESYLFVEKRNDFERVPEALMAMFGEPKLVMMLPIEKRDHLGFADIKKVRSELKEKGFYLQLPPPVVNLLEQHKKEIGFNPD</sequence>
<proteinExistence type="inferred from homology"/>
<protein>
    <recommendedName>
        <fullName evidence="1">YcgL domain-containing protein Spea_2443</fullName>
    </recommendedName>
</protein>
<dbReference type="EMBL" id="CP000851">
    <property type="protein sequence ID" value="ABV87763.1"/>
    <property type="molecule type" value="Genomic_DNA"/>
</dbReference>
<dbReference type="RefSeq" id="WP_012155675.1">
    <property type="nucleotide sequence ID" value="NC_009901.1"/>
</dbReference>
<dbReference type="SMR" id="A8H5C6"/>
<dbReference type="STRING" id="398579.Spea_2443"/>
<dbReference type="KEGG" id="spl:Spea_2443"/>
<dbReference type="eggNOG" id="COG3100">
    <property type="taxonomic scope" value="Bacteria"/>
</dbReference>
<dbReference type="HOGENOM" id="CLU_155118_1_0_6"/>
<dbReference type="OrthoDB" id="7062382at2"/>
<dbReference type="Proteomes" id="UP000002608">
    <property type="component" value="Chromosome"/>
</dbReference>
<dbReference type="Gene3D" id="3.10.510.20">
    <property type="entry name" value="YcgL domain"/>
    <property type="match status" value="1"/>
</dbReference>
<dbReference type="HAMAP" id="MF_01866">
    <property type="entry name" value="UPF0745"/>
    <property type="match status" value="1"/>
</dbReference>
<dbReference type="InterPro" id="IPR038068">
    <property type="entry name" value="YcgL-like_sf"/>
</dbReference>
<dbReference type="InterPro" id="IPR027354">
    <property type="entry name" value="YcgL_dom"/>
</dbReference>
<dbReference type="PANTHER" id="PTHR38109">
    <property type="entry name" value="PROTEIN YCGL"/>
    <property type="match status" value="1"/>
</dbReference>
<dbReference type="PANTHER" id="PTHR38109:SF1">
    <property type="entry name" value="PROTEIN YCGL"/>
    <property type="match status" value="1"/>
</dbReference>
<dbReference type="Pfam" id="PF05166">
    <property type="entry name" value="YcgL"/>
    <property type="match status" value="1"/>
</dbReference>
<dbReference type="SUPFAM" id="SSF160191">
    <property type="entry name" value="YcgL-like"/>
    <property type="match status" value="1"/>
</dbReference>
<dbReference type="PROSITE" id="PS51648">
    <property type="entry name" value="YCGL"/>
    <property type="match status" value="1"/>
</dbReference>